<sequence>MHWIWLVLLLAVVGAIVGAATNALAIRMLFRPHRAYSIGKWQLPFTPGLLPRRQKELAVQLGNIVANHLLTAEGLGKKFGSTAFAAELTNWLKKQLASWLRSERTVESILKPLFQADIGREHLVVQSKSWLKDRLKRYLQKNKEVPIKSVVPQELQDRLTDWLPEASALLLKRATAYIDSEEGEQRIGAMVRQFLTTKGKVGSMVSMFFSADKLTEYVLPEIKKFLHDEQTKETVQSLLQTEWHRMLNRPLASFQAENYVDQFVDKAAEELEGKIPVLNWYNAPLSTWTTPYAEPLVERGVPVIVGMVTVYMEQHIADILSKLRLEEVIEEQVASFSMAHLEKLIMNITRRELHMITLLGGLIGGIVGLIQAVIVHFFY</sequence>
<dbReference type="EMBL" id="AP006627">
    <property type="protein sequence ID" value="BAD64053.1"/>
    <property type="molecule type" value="Genomic_DNA"/>
</dbReference>
<dbReference type="SMR" id="Q5WHV2"/>
<dbReference type="STRING" id="66692.ABC1518"/>
<dbReference type="KEGG" id="bcl:ABC1518"/>
<dbReference type="eggNOG" id="COG4399">
    <property type="taxonomic scope" value="Bacteria"/>
</dbReference>
<dbReference type="HOGENOM" id="CLU_042384_0_0_9"/>
<dbReference type="Proteomes" id="UP000001168">
    <property type="component" value="Chromosome"/>
</dbReference>
<dbReference type="GO" id="GO:0005886">
    <property type="term" value="C:plasma membrane"/>
    <property type="evidence" value="ECO:0007669"/>
    <property type="project" value="UniProtKB-SubCell"/>
</dbReference>
<dbReference type="InterPro" id="IPR007383">
    <property type="entry name" value="DUF445"/>
</dbReference>
<dbReference type="InterPro" id="IPR016991">
    <property type="entry name" value="UCP032178"/>
</dbReference>
<dbReference type="PANTHER" id="PTHR35791">
    <property type="entry name" value="UPF0754 MEMBRANE PROTEIN YHEB"/>
    <property type="match status" value="1"/>
</dbReference>
<dbReference type="PANTHER" id="PTHR35791:SF1">
    <property type="entry name" value="UPF0754 MEMBRANE PROTEIN YHEB"/>
    <property type="match status" value="1"/>
</dbReference>
<dbReference type="Pfam" id="PF04286">
    <property type="entry name" value="DUF445"/>
    <property type="match status" value="1"/>
</dbReference>
<dbReference type="PIRSF" id="PIRSF032178">
    <property type="entry name" value="UCP032178"/>
    <property type="match status" value="1"/>
</dbReference>
<feature type="chain" id="PRO_0000388278" description="UPF0754 membrane protein ABC1518">
    <location>
        <begin position="1"/>
        <end position="379"/>
    </location>
</feature>
<feature type="transmembrane region" description="Helical" evidence="2">
    <location>
        <begin position="1"/>
        <end position="21"/>
    </location>
</feature>
<feature type="transmembrane region" description="Helical" evidence="2">
    <location>
        <begin position="358"/>
        <end position="378"/>
    </location>
</feature>
<gene>
    <name type="ordered locus">ABC1518</name>
</gene>
<keyword id="KW-1003">Cell membrane</keyword>
<keyword id="KW-0472">Membrane</keyword>
<keyword id="KW-1185">Reference proteome</keyword>
<keyword id="KW-0812">Transmembrane</keyword>
<keyword id="KW-1133">Transmembrane helix</keyword>
<proteinExistence type="inferred from homology"/>
<protein>
    <recommendedName>
        <fullName>UPF0754 membrane protein ABC1518</fullName>
    </recommendedName>
</protein>
<accession>Q5WHV2</accession>
<name>Y1518_SHOC1</name>
<organism>
    <name type="scientific">Shouchella clausii (strain KSM-K16)</name>
    <name type="common">Alkalihalobacillus clausii</name>
    <dbReference type="NCBI Taxonomy" id="66692"/>
    <lineage>
        <taxon>Bacteria</taxon>
        <taxon>Bacillati</taxon>
        <taxon>Bacillota</taxon>
        <taxon>Bacilli</taxon>
        <taxon>Bacillales</taxon>
        <taxon>Bacillaceae</taxon>
        <taxon>Shouchella</taxon>
    </lineage>
</organism>
<comment type="subcellular location">
    <subcellularLocation>
        <location evidence="1">Cell membrane</location>
        <topology evidence="1">Multi-pass membrane protein</topology>
    </subcellularLocation>
</comment>
<comment type="similarity">
    <text evidence="3">Belongs to the UPF0754 family.</text>
</comment>
<evidence type="ECO:0000250" key="1"/>
<evidence type="ECO:0000255" key="2"/>
<evidence type="ECO:0000305" key="3"/>
<reference key="1">
    <citation type="submission" date="2003-10" db="EMBL/GenBank/DDBJ databases">
        <title>The complete genome sequence of the alkaliphilic Bacillus clausii KSM-K16.</title>
        <authorList>
            <person name="Takaki Y."/>
            <person name="Kageyama Y."/>
            <person name="Shimamura S."/>
            <person name="Suzuki H."/>
            <person name="Nishi S."/>
            <person name="Hatada Y."/>
            <person name="Kawai S."/>
            <person name="Ito S."/>
            <person name="Horikoshi K."/>
        </authorList>
    </citation>
    <scope>NUCLEOTIDE SEQUENCE [LARGE SCALE GENOMIC DNA]</scope>
    <source>
        <strain>KSM-K16</strain>
    </source>
</reference>